<protein>
    <recommendedName>
        <fullName>Sperm mitochondrial-associated cysteine-rich protein</fullName>
    </recommendedName>
</protein>
<reference key="1">
    <citation type="journal article" date="1990" name="Dev. Biol.">
        <title>Sequence and developmental expression of the mRNA encoding the seleno-protein of the sperm mitochondrial capsule in the mouse.</title>
        <authorList>
            <person name="Kleene K.C."/>
            <person name="Smith J."/>
            <person name="Bozorgzadeh A."/>
            <person name="Harris M."/>
            <person name="Hahn L."/>
            <person name="Karimpour I."/>
            <person name="Gerstel J."/>
        </authorList>
    </citation>
    <scope>NUCLEOTIDE SEQUENCE [MRNA]</scope>
    <scope>TISSUE SPECIFICITY</scope>
    <scope>DEVELOPMENTAL STAGE</scope>
    <source>
        <strain>CD-1</strain>
        <tissue>Testis</tissue>
    </source>
</reference>
<reference key="2">
    <citation type="submission" date="2005-01" db="EMBL/GenBank/DDBJ databases">
        <authorList>
            <person name="Kleene K.C."/>
        </authorList>
    </citation>
    <scope>SEQUENCE REVISION TO N-TERMINUS</scope>
</reference>
<reference key="3">
    <citation type="journal article" date="1992" name="DNA Cell Biol.">
        <title>Sequence of the gene encoding the mitochondrial capsule selenoprotein of mouse sperm: identification of three in-phase TGA selenocysteine codons.</title>
        <authorList>
            <person name="Karimpour I."/>
            <person name="Cutler M."/>
            <person name="Shih D."/>
            <person name="Smith J."/>
            <person name="Kleene K.C."/>
        </authorList>
    </citation>
    <scope>NUCLEOTIDE SEQUENCE [GENOMIC DNA]</scope>
    <source>
        <strain>BALB/cJ</strain>
        <tissue>Liver</tissue>
    </source>
</reference>
<reference key="4">
    <citation type="journal article" date="2005" name="Science">
        <title>The transcriptional landscape of the mammalian genome.</title>
        <authorList>
            <person name="Carninci P."/>
            <person name="Kasukawa T."/>
            <person name="Katayama S."/>
            <person name="Gough J."/>
            <person name="Frith M.C."/>
            <person name="Maeda N."/>
            <person name="Oyama R."/>
            <person name="Ravasi T."/>
            <person name="Lenhard B."/>
            <person name="Wells C."/>
            <person name="Kodzius R."/>
            <person name="Shimokawa K."/>
            <person name="Bajic V.B."/>
            <person name="Brenner S.E."/>
            <person name="Batalov S."/>
            <person name="Forrest A.R."/>
            <person name="Zavolan M."/>
            <person name="Davis M.J."/>
            <person name="Wilming L.G."/>
            <person name="Aidinis V."/>
            <person name="Allen J.E."/>
            <person name="Ambesi-Impiombato A."/>
            <person name="Apweiler R."/>
            <person name="Aturaliya R.N."/>
            <person name="Bailey T.L."/>
            <person name="Bansal M."/>
            <person name="Baxter L."/>
            <person name="Beisel K.W."/>
            <person name="Bersano T."/>
            <person name="Bono H."/>
            <person name="Chalk A.M."/>
            <person name="Chiu K.P."/>
            <person name="Choudhary V."/>
            <person name="Christoffels A."/>
            <person name="Clutterbuck D.R."/>
            <person name="Crowe M.L."/>
            <person name="Dalla E."/>
            <person name="Dalrymple B.P."/>
            <person name="de Bono B."/>
            <person name="Della Gatta G."/>
            <person name="di Bernardo D."/>
            <person name="Down T."/>
            <person name="Engstrom P."/>
            <person name="Fagiolini M."/>
            <person name="Faulkner G."/>
            <person name="Fletcher C.F."/>
            <person name="Fukushima T."/>
            <person name="Furuno M."/>
            <person name="Futaki S."/>
            <person name="Gariboldi M."/>
            <person name="Georgii-Hemming P."/>
            <person name="Gingeras T.R."/>
            <person name="Gojobori T."/>
            <person name="Green R.E."/>
            <person name="Gustincich S."/>
            <person name="Harbers M."/>
            <person name="Hayashi Y."/>
            <person name="Hensch T.K."/>
            <person name="Hirokawa N."/>
            <person name="Hill D."/>
            <person name="Huminiecki L."/>
            <person name="Iacono M."/>
            <person name="Ikeo K."/>
            <person name="Iwama A."/>
            <person name="Ishikawa T."/>
            <person name="Jakt M."/>
            <person name="Kanapin A."/>
            <person name="Katoh M."/>
            <person name="Kawasawa Y."/>
            <person name="Kelso J."/>
            <person name="Kitamura H."/>
            <person name="Kitano H."/>
            <person name="Kollias G."/>
            <person name="Krishnan S.P."/>
            <person name="Kruger A."/>
            <person name="Kummerfeld S.K."/>
            <person name="Kurochkin I.V."/>
            <person name="Lareau L.F."/>
            <person name="Lazarevic D."/>
            <person name="Lipovich L."/>
            <person name="Liu J."/>
            <person name="Liuni S."/>
            <person name="McWilliam S."/>
            <person name="Madan Babu M."/>
            <person name="Madera M."/>
            <person name="Marchionni L."/>
            <person name="Matsuda H."/>
            <person name="Matsuzawa S."/>
            <person name="Miki H."/>
            <person name="Mignone F."/>
            <person name="Miyake S."/>
            <person name="Morris K."/>
            <person name="Mottagui-Tabar S."/>
            <person name="Mulder N."/>
            <person name="Nakano N."/>
            <person name="Nakauchi H."/>
            <person name="Ng P."/>
            <person name="Nilsson R."/>
            <person name="Nishiguchi S."/>
            <person name="Nishikawa S."/>
            <person name="Nori F."/>
            <person name="Ohara O."/>
            <person name="Okazaki Y."/>
            <person name="Orlando V."/>
            <person name="Pang K.C."/>
            <person name="Pavan W.J."/>
            <person name="Pavesi G."/>
            <person name="Pesole G."/>
            <person name="Petrovsky N."/>
            <person name="Piazza S."/>
            <person name="Reed J."/>
            <person name="Reid J.F."/>
            <person name="Ring B.Z."/>
            <person name="Ringwald M."/>
            <person name="Rost B."/>
            <person name="Ruan Y."/>
            <person name="Salzberg S.L."/>
            <person name="Sandelin A."/>
            <person name="Schneider C."/>
            <person name="Schoenbach C."/>
            <person name="Sekiguchi K."/>
            <person name="Semple C.A."/>
            <person name="Seno S."/>
            <person name="Sessa L."/>
            <person name="Sheng Y."/>
            <person name="Shibata Y."/>
            <person name="Shimada H."/>
            <person name="Shimada K."/>
            <person name="Silva D."/>
            <person name="Sinclair B."/>
            <person name="Sperling S."/>
            <person name="Stupka E."/>
            <person name="Sugiura K."/>
            <person name="Sultana R."/>
            <person name="Takenaka Y."/>
            <person name="Taki K."/>
            <person name="Tammoja K."/>
            <person name="Tan S.L."/>
            <person name="Tang S."/>
            <person name="Taylor M.S."/>
            <person name="Tegner J."/>
            <person name="Teichmann S.A."/>
            <person name="Ueda H.R."/>
            <person name="van Nimwegen E."/>
            <person name="Verardo R."/>
            <person name="Wei C.L."/>
            <person name="Yagi K."/>
            <person name="Yamanishi H."/>
            <person name="Zabarovsky E."/>
            <person name="Zhu S."/>
            <person name="Zimmer A."/>
            <person name="Hide W."/>
            <person name="Bult C."/>
            <person name="Grimmond S.M."/>
            <person name="Teasdale R.D."/>
            <person name="Liu E.T."/>
            <person name="Brusic V."/>
            <person name="Quackenbush J."/>
            <person name="Wahlestedt C."/>
            <person name="Mattick J.S."/>
            <person name="Hume D.A."/>
            <person name="Kai C."/>
            <person name="Sasaki D."/>
            <person name="Tomaru Y."/>
            <person name="Fukuda S."/>
            <person name="Kanamori-Katayama M."/>
            <person name="Suzuki M."/>
            <person name="Aoki J."/>
            <person name="Arakawa T."/>
            <person name="Iida J."/>
            <person name="Imamura K."/>
            <person name="Itoh M."/>
            <person name="Kato T."/>
            <person name="Kawaji H."/>
            <person name="Kawagashira N."/>
            <person name="Kawashima T."/>
            <person name="Kojima M."/>
            <person name="Kondo S."/>
            <person name="Konno H."/>
            <person name="Nakano K."/>
            <person name="Ninomiya N."/>
            <person name="Nishio T."/>
            <person name="Okada M."/>
            <person name="Plessy C."/>
            <person name="Shibata K."/>
            <person name="Shiraki T."/>
            <person name="Suzuki S."/>
            <person name="Tagami M."/>
            <person name="Waki K."/>
            <person name="Watahiki A."/>
            <person name="Okamura-Oho Y."/>
            <person name="Suzuki H."/>
            <person name="Kawai J."/>
            <person name="Hayashizaki Y."/>
        </authorList>
    </citation>
    <scope>NUCLEOTIDE SEQUENCE [LARGE SCALE MRNA]</scope>
    <source>
        <strain>C57BL/6J</strain>
        <tissue>Testis</tissue>
    </source>
</reference>
<reference key="5">
    <citation type="journal article" date="2004" name="Genome Res.">
        <title>The status, quality, and expansion of the NIH full-length cDNA project: the Mammalian Gene Collection (MGC).</title>
        <authorList>
            <consortium name="The MGC Project Team"/>
        </authorList>
    </citation>
    <scope>NUCLEOTIDE SEQUENCE [LARGE SCALE MRNA]</scope>
    <source>
        <tissue>Testis</tissue>
    </source>
</reference>
<reference key="6">
    <citation type="journal article" date="1996" name="Mol. Reprod. Dev.">
        <title>Developmental expression, intracellular localization, and selenium content of the cysteine-rich protein associated with the mitochondrial capsules of mouse sperm.</title>
        <authorList>
            <person name="Cataldo L."/>
            <person name="Baig K."/>
            <person name="Oko R."/>
            <person name="Mastrangelo M.A."/>
            <person name="Kleene K.C."/>
        </authorList>
    </citation>
    <scope>TISSUE SPECIFICITY</scope>
    <scope>DEVELOPMENTAL STAGE</scope>
    <scope>SUBCELLULAR LOCATION</scope>
</reference>
<reference key="7">
    <citation type="journal article" date="1997" name="J. Vet. Med. Sci.">
        <title>Expression pattern of the mitochondrial capsule selenoprotein mRNA in the mouse testis after puberty; in situ hybridization study.</title>
        <authorList>
            <person name="Nam S.-Y."/>
            <person name="Maeda S."/>
            <person name="Ogawa K."/>
            <person name="Kurohmaru M."/>
            <person name="Hayashi Y."/>
        </authorList>
    </citation>
    <scope>TISSUE SPECIFICITY</scope>
    <scope>DEVELOPMENTAL STAGE</scope>
</reference>
<reference key="8">
    <citation type="journal article" date="2002" name="Mol. Cell. Biol.">
        <title>Asthenozoospermia in mice with targeted deletion of the sperm mitochondrion-associated cysteine-rich protein (Smcp) gene.</title>
        <authorList>
            <person name="Nayernia K."/>
            <person name="Adham I.M."/>
            <person name="Burkhardt-Goettges E."/>
            <person name="Neesen J."/>
            <person name="Rieche M."/>
            <person name="Wolf S."/>
            <person name="Sancken U."/>
            <person name="Kleene K.C."/>
            <person name="Engel W."/>
        </authorList>
    </citation>
    <scope>FUNCTION</scope>
</reference>
<proteinExistence type="evidence at transcript level"/>
<keyword id="KW-0963">Cytoplasm</keyword>
<keyword id="KW-0278">Fertilization</keyword>
<keyword id="KW-0472">Membrane</keyword>
<keyword id="KW-0496">Mitochondrion</keyword>
<keyword id="KW-0597">Phosphoprotein</keyword>
<keyword id="KW-1185">Reference proteome</keyword>
<organism>
    <name type="scientific">Mus musculus</name>
    <name type="common">Mouse</name>
    <dbReference type="NCBI Taxonomy" id="10090"/>
    <lineage>
        <taxon>Eukaryota</taxon>
        <taxon>Metazoa</taxon>
        <taxon>Chordata</taxon>
        <taxon>Craniata</taxon>
        <taxon>Vertebrata</taxon>
        <taxon>Euteleostomi</taxon>
        <taxon>Mammalia</taxon>
        <taxon>Eutheria</taxon>
        <taxon>Euarchontoglires</taxon>
        <taxon>Glires</taxon>
        <taxon>Rodentia</taxon>
        <taxon>Myomorpha</taxon>
        <taxon>Muroidea</taxon>
        <taxon>Muridae</taxon>
        <taxon>Murinae</taxon>
        <taxon>Mus</taxon>
        <taxon>Mus</taxon>
    </lineage>
</organism>
<feature type="chain" id="PRO_0000096308" description="Sperm mitochondrial-associated cysteine-rich protein">
    <location>
        <begin position="1"/>
        <end position="143"/>
    </location>
</feature>
<feature type="region of interest" description="Disordered" evidence="2">
    <location>
        <begin position="101"/>
        <end position="143"/>
    </location>
</feature>
<feature type="compositionally biased region" description="Polar residues" evidence="2">
    <location>
        <begin position="113"/>
        <end position="126"/>
    </location>
</feature>
<feature type="compositionally biased region" description="Polar residues" evidence="2">
    <location>
        <begin position="134"/>
        <end position="143"/>
    </location>
</feature>
<feature type="modified residue" description="Phosphoserine" evidence="1">
    <location>
        <position position="37"/>
    </location>
</feature>
<feature type="modified residue" description="Phosphoserine" evidence="1">
    <location>
        <position position="44"/>
    </location>
</feature>
<feature type="modified residue" description="Phosphoserine" evidence="1">
    <location>
        <position position="110"/>
    </location>
</feature>
<feature type="modified residue" description="Phosphoserine" evidence="1">
    <location>
        <position position="128"/>
    </location>
</feature>
<accession>P15265</accession>
<accession>O70613</accession>
<accession>Q6P8N3</accession>
<evidence type="ECO:0000250" key="1">
    <source>
        <dbReference type="UniProtKB" id="Q64298"/>
    </source>
</evidence>
<evidence type="ECO:0000256" key="2">
    <source>
        <dbReference type="SAM" id="MobiDB-lite"/>
    </source>
</evidence>
<evidence type="ECO:0000269" key="3">
    <source>
    </source>
</evidence>
<evidence type="ECO:0000269" key="4">
    <source>
    </source>
</evidence>
<evidence type="ECO:0000269" key="5">
    <source>
    </source>
</evidence>
<evidence type="ECO:0000269" key="6">
    <source>
    </source>
</evidence>
<evidence type="ECO:0000305" key="7"/>
<sequence>MSDPSKTNQCPPPCCPPKPCCPPKPCCPQKPPCCPKSPCCPPKSPCCPPKPCPCPPPCPCPCPATCPCPLKPPCCPQKCSCCPKKCTCCPQPPPCCAQPTCCSSENKTESDSDTSGQTLEKGSQSPQSPPGAQGNWNQKKSNK</sequence>
<dbReference type="EMBL" id="M29603">
    <property type="protein sequence ID" value="AAA53045.3"/>
    <property type="molecule type" value="mRNA"/>
</dbReference>
<dbReference type="EMBL" id="M88462">
    <property type="protein sequence ID" value="AAB08438.2"/>
    <property type="status" value="ALT_INIT"/>
    <property type="molecule type" value="Genomic_DNA"/>
</dbReference>
<dbReference type="EMBL" id="S49657">
    <property type="protein sequence ID" value="AAC08282.2"/>
    <property type="molecule type" value="Genomic_DNA"/>
</dbReference>
<dbReference type="EMBL" id="S49654">
    <property type="protein sequence ID" value="AAC08282.2"/>
    <property type="status" value="JOINED"/>
    <property type="molecule type" value="Genomic_DNA"/>
</dbReference>
<dbReference type="EMBL" id="S49659">
    <property type="protein sequence ID" value="AAC08283.1"/>
    <property type="status" value="ALT_INIT"/>
    <property type="molecule type" value="mRNA"/>
</dbReference>
<dbReference type="EMBL" id="AK077172">
    <property type="protein sequence ID" value="BAE43359.1"/>
    <property type="status" value="ALT_INIT"/>
    <property type="molecule type" value="mRNA"/>
</dbReference>
<dbReference type="EMBL" id="BC055104">
    <property type="protein sequence ID" value="AAH55104.2"/>
    <property type="status" value="ALT_INIT"/>
    <property type="molecule type" value="mRNA"/>
</dbReference>
<dbReference type="EMBL" id="BC061167">
    <property type="protein sequence ID" value="AAH61167.1"/>
    <property type="status" value="ALT_INIT"/>
    <property type="molecule type" value="mRNA"/>
</dbReference>
<dbReference type="CCDS" id="CCDS89661.1"/>
<dbReference type="PIR" id="T10081">
    <property type="entry name" value="T10081"/>
</dbReference>
<dbReference type="RefSeq" id="NP_032600.2">
    <property type="nucleotide sequence ID" value="NM_008574.3"/>
</dbReference>
<dbReference type="FunCoup" id="P15265">
    <property type="interactions" value="133"/>
</dbReference>
<dbReference type="STRING" id="10090.ENSMUSP00000096487"/>
<dbReference type="PhosphoSitePlus" id="P15265"/>
<dbReference type="SwissPalm" id="P15265"/>
<dbReference type="PaxDb" id="10090-ENSMUSP00000096487"/>
<dbReference type="PeptideAtlas" id="P15265"/>
<dbReference type="ProteomicsDB" id="252752"/>
<dbReference type="DNASU" id="17235"/>
<dbReference type="Ensembl" id="ENSMUST00000098888.7">
    <property type="protein sequence ID" value="ENSMUSP00000096487.6"/>
    <property type="gene ID" value="ENSMUSG00000074435.11"/>
</dbReference>
<dbReference type="Ensembl" id="ENSMUST00000194965.6">
    <property type="protein sequence ID" value="ENSMUSP00000142023.2"/>
    <property type="gene ID" value="ENSMUSG00000074435.11"/>
</dbReference>
<dbReference type="GeneID" id="17235"/>
<dbReference type="KEGG" id="mmu:17235"/>
<dbReference type="UCSC" id="uc008qeg.1">
    <property type="organism name" value="mouse"/>
</dbReference>
<dbReference type="AGR" id="MGI:96945"/>
<dbReference type="CTD" id="4184"/>
<dbReference type="MGI" id="MGI:96945">
    <property type="gene designation" value="Smcp"/>
</dbReference>
<dbReference type="VEuPathDB" id="HostDB:ENSMUSG00000074435"/>
<dbReference type="eggNOG" id="ENOG502TF5H">
    <property type="taxonomic scope" value="Eukaryota"/>
</dbReference>
<dbReference type="GeneTree" id="ENSGT00730000114093"/>
<dbReference type="HOGENOM" id="CLU_1805544_0_0_1"/>
<dbReference type="InParanoid" id="P15265"/>
<dbReference type="OMA" id="PQKSPCC"/>
<dbReference type="OrthoDB" id="9635076at2759"/>
<dbReference type="BioGRID-ORCS" id="17235">
    <property type="hits" value="2 hits in 54 CRISPR screens"/>
</dbReference>
<dbReference type="ChiTaRS" id="Smcp">
    <property type="organism name" value="mouse"/>
</dbReference>
<dbReference type="PRO" id="PR:P15265"/>
<dbReference type="Proteomes" id="UP000000589">
    <property type="component" value="Chromosome 3"/>
</dbReference>
<dbReference type="RNAct" id="P15265">
    <property type="molecule type" value="protein"/>
</dbReference>
<dbReference type="Bgee" id="ENSMUSG00000074435">
    <property type="expression patterns" value="Expressed in seminiferous tubule of testis and 30 other cell types or tissues"/>
</dbReference>
<dbReference type="GO" id="GO:0005737">
    <property type="term" value="C:cytoplasm"/>
    <property type="evidence" value="ECO:0000314"/>
    <property type="project" value="UniProtKB"/>
</dbReference>
<dbReference type="GO" id="GO:0005741">
    <property type="term" value="C:mitochondrial outer membrane"/>
    <property type="evidence" value="ECO:0000304"/>
    <property type="project" value="MGI"/>
</dbReference>
<dbReference type="GO" id="GO:0005739">
    <property type="term" value="C:mitochondrion"/>
    <property type="evidence" value="ECO:0000314"/>
    <property type="project" value="UniProtKB"/>
</dbReference>
<dbReference type="GO" id="GO:0007339">
    <property type="term" value="P:binding of sperm to zona pellucida"/>
    <property type="evidence" value="ECO:0000316"/>
    <property type="project" value="MGI"/>
</dbReference>
<dbReference type="GO" id="GO:0030317">
    <property type="term" value="P:flagellated sperm motility"/>
    <property type="evidence" value="ECO:0000314"/>
    <property type="project" value="UniProtKB"/>
</dbReference>
<dbReference type="GO" id="GO:0007341">
    <property type="term" value="P:penetration of zona pellucida"/>
    <property type="evidence" value="ECO:0000315"/>
    <property type="project" value="MGI"/>
</dbReference>
<dbReference type="PRINTS" id="PR00021">
    <property type="entry name" value="PRORICH"/>
</dbReference>
<name>MCSP_MOUSE</name>
<comment type="function">
    <text evidence="3">Involved in sperm motility. Its absence is associated with genetic background dependent male infertility. Infertility may be due to reduced sperm motility in the female reproductive tract and inability to penetrate the oocyte zona pellucida.</text>
</comment>
<comment type="subcellular location">
    <subcellularLocation>
        <location evidence="5">Cytoplasm</location>
    </subcellularLocation>
    <subcellularLocation>
        <location evidence="7">Mitochondrion membrane</location>
        <topology evidence="7">Peripheral membrane protein</topology>
        <orientation evidence="7">Cytoplasmic side</orientation>
    </subcellularLocation>
    <text>Becomes associated with the spermatid mitochondrion capsule at step 16 of spermatogenesis.</text>
</comment>
<comment type="tissue specificity">
    <text evidence="4 5 6">Testis. Is selectively expressed in the spermatids of seminiferous tubules.</text>
</comment>
<comment type="developmental stage">
    <text evidence="4 5 6">First detected in step 11 spermatids. Levels increase in subsequent steps to reach a maximum in late step 15 and early step 16. Levels decrease in late step 16.</text>
</comment>
<comment type="caution">
    <text evidence="7">Was originally (PubMed:2303168, PubMed:1418626) thought to be a selenoprotein and was known as sperm mitochondrial capsule selenoprotein.</text>
</comment>
<comment type="sequence caution" evidence="7">
    <conflict type="erroneous initiation">
        <sequence resource="EMBL-CDS" id="AAB08438"/>
    </conflict>
</comment>
<comment type="sequence caution" evidence="7">
    <conflict type="erroneous initiation">
        <sequence resource="EMBL-CDS" id="AAC08283"/>
    </conflict>
</comment>
<comment type="sequence caution" evidence="7">
    <conflict type="erroneous initiation">
        <sequence resource="EMBL-CDS" id="AAH55104"/>
    </conflict>
</comment>
<comment type="sequence caution" evidence="7">
    <conflict type="erroneous initiation">
        <sequence resource="EMBL-CDS" id="AAH61167"/>
    </conflict>
</comment>
<comment type="sequence caution" evidence="7">
    <conflict type="erroneous initiation">
        <sequence resource="EMBL-CDS" id="BAE43359"/>
    </conflict>
</comment>
<gene>
    <name type="primary">Smcp</name>
    <name type="synonym">Mcs</name>
    <name type="synonym">Mcsp</name>
</gene>